<sequence>MAIDENKQKALAAALGQIEKQFGKGSIMRLGEDRSMDVETISTGSLSLDIALGAGGLPMGRIVEIYGPESSGKTTLTLQVIAAAQREVKTCAFIDAEHALDPIYAKKLGVDIDNLLCSQPDTGEQALEICDALTRSGAVDVIIVDSVAALTPKAEIEGEIGDSHMGLAARMMSQAMRKLAGNLKNANTLLIFINQIRMKIGVMFGNPETTTGGNALKFYASVRLDIRRIGSVKEGDVVVGSETRVKVVKNKVAAPFKQAEFQIMYGEGINIRGELVDLGVKHKLIEKAGAWYSYNGEKIGQGKANACSFLKDHPEVAAELDKKLRDMLLHSAEGNSLVSDVESEDEGASESNEEF</sequence>
<evidence type="ECO:0000255" key="1">
    <source>
        <dbReference type="HAMAP-Rule" id="MF_00268"/>
    </source>
</evidence>
<evidence type="ECO:0000256" key="2">
    <source>
        <dbReference type="SAM" id="MobiDB-lite"/>
    </source>
</evidence>
<name>RECA_SODGM</name>
<organism>
    <name type="scientific">Sodalis glossinidius (strain morsitans)</name>
    <dbReference type="NCBI Taxonomy" id="343509"/>
    <lineage>
        <taxon>Bacteria</taxon>
        <taxon>Pseudomonadati</taxon>
        <taxon>Pseudomonadota</taxon>
        <taxon>Gammaproteobacteria</taxon>
        <taxon>Enterobacterales</taxon>
        <taxon>Bruguierivoracaceae</taxon>
        <taxon>Sodalis</taxon>
    </lineage>
</organism>
<comment type="function">
    <text evidence="1">Can catalyze the hydrolysis of ATP in the presence of single-stranded DNA, the ATP-dependent uptake of single-stranded DNA by duplex DNA, and the ATP-dependent hybridization of homologous single-stranded DNAs. It interacts with LexA causing its activation and leading to its autocatalytic cleavage.</text>
</comment>
<comment type="subcellular location">
    <subcellularLocation>
        <location evidence="1">Cytoplasm</location>
    </subcellularLocation>
</comment>
<comment type="similarity">
    <text evidence="1">Belongs to the RecA family.</text>
</comment>
<protein>
    <recommendedName>
        <fullName evidence="1">Protein RecA</fullName>
    </recommendedName>
    <alternativeName>
        <fullName evidence="1">Recombinase A</fullName>
    </alternativeName>
</protein>
<keyword id="KW-0067">ATP-binding</keyword>
<keyword id="KW-0963">Cytoplasm</keyword>
<keyword id="KW-0227">DNA damage</keyword>
<keyword id="KW-0233">DNA recombination</keyword>
<keyword id="KW-0234">DNA repair</keyword>
<keyword id="KW-0238">DNA-binding</keyword>
<keyword id="KW-0547">Nucleotide-binding</keyword>
<keyword id="KW-0742">SOS response</keyword>
<dbReference type="EMBL" id="AP008232">
    <property type="protein sequence ID" value="BAE73812.1"/>
    <property type="molecule type" value="Genomic_DNA"/>
</dbReference>
<dbReference type="RefSeq" id="WP_011410510.1">
    <property type="nucleotide sequence ID" value="NC_007712.1"/>
</dbReference>
<dbReference type="SMR" id="Q2NVL3"/>
<dbReference type="STRING" id="343509.SG0537"/>
<dbReference type="KEGG" id="sgl:SG0537"/>
<dbReference type="eggNOG" id="COG0468">
    <property type="taxonomic scope" value="Bacteria"/>
</dbReference>
<dbReference type="HOGENOM" id="CLU_040469_3_2_6"/>
<dbReference type="OrthoDB" id="9776733at2"/>
<dbReference type="BioCyc" id="SGLO343509:SGP1_RS04755-MONOMER"/>
<dbReference type="Proteomes" id="UP000001932">
    <property type="component" value="Chromosome"/>
</dbReference>
<dbReference type="GO" id="GO:0005829">
    <property type="term" value="C:cytosol"/>
    <property type="evidence" value="ECO:0007669"/>
    <property type="project" value="TreeGrafter"/>
</dbReference>
<dbReference type="GO" id="GO:0005524">
    <property type="term" value="F:ATP binding"/>
    <property type="evidence" value="ECO:0007669"/>
    <property type="project" value="UniProtKB-UniRule"/>
</dbReference>
<dbReference type="GO" id="GO:0016887">
    <property type="term" value="F:ATP hydrolysis activity"/>
    <property type="evidence" value="ECO:0007669"/>
    <property type="project" value="InterPro"/>
</dbReference>
<dbReference type="GO" id="GO:0140664">
    <property type="term" value="F:ATP-dependent DNA damage sensor activity"/>
    <property type="evidence" value="ECO:0007669"/>
    <property type="project" value="InterPro"/>
</dbReference>
<dbReference type="GO" id="GO:0003684">
    <property type="term" value="F:damaged DNA binding"/>
    <property type="evidence" value="ECO:0007669"/>
    <property type="project" value="UniProtKB-UniRule"/>
</dbReference>
<dbReference type="GO" id="GO:0003697">
    <property type="term" value="F:single-stranded DNA binding"/>
    <property type="evidence" value="ECO:0007669"/>
    <property type="project" value="UniProtKB-UniRule"/>
</dbReference>
<dbReference type="GO" id="GO:0006310">
    <property type="term" value="P:DNA recombination"/>
    <property type="evidence" value="ECO:0007669"/>
    <property type="project" value="UniProtKB-UniRule"/>
</dbReference>
<dbReference type="GO" id="GO:0006281">
    <property type="term" value="P:DNA repair"/>
    <property type="evidence" value="ECO:0007669"/>
    <property type="project" value="UniProtKB-UniRule"/>
</dbReference>
<dbReference type="GO" id="GO:0009432">
    <property type="term" value="P:SOS response"/>
    <property type="evidence" value="ECO:0007669"/>
    <property type="project" value="UniProtKB-UniRule"/>
</dbReference>
<dbReference type="CDD" id="cd00983">
    <property type="entry name" value="RecA"/>
    <property type="match status" value="1"/>
</dbReference>
<dbReference type="FunFam" id="3.40.50.300:FF:000087">
    <property type="entry name" value="Recombinase RecA"/>
    <property type="match status" value="1"/>
</dbReference>
<dbReference type="Gene3D" id="3.40.50.300">
    <property type="entry name" value="P-loop containing nucleotide triphosphate hydrolases"/>
    <property type="match status" value="1"/>
</dbReference>
<dbReference type="HAMAP" id="MF_00268">
    <property type="entry name" value="RecA"/>
    <property type="match status" value="1"/>
</dbReference>
<dbReference type="InterPro" id="IPR003593">
    <property type="entry name" value="AAA+_ATPase"/>
</dbReference>
<dbReference type="InterPro" id="IPR013765">
    <property type="entry name" value="DNA_recomb/repair_RecA"/>
</dbReference>
<dbReference type="InterPro" id="IPR020584">
    <property type="entry name" value="DNA_recomb/repair_RecA_CS"/>
</dbReference>
<dbReference type="InterPro" id="IPR027417">
    <property type="entry name" value="P-loop_NTPase"/>
</dbReference>
<dbReference type="InterPro" id="IPR049261">
    <property type="entry name" value="RecA-like_C"/>
</dbReference>
<dbReference type="InterPro" id="IPR049428">
    <property type="entry name" value="RecA-like_N"/>
</dbReference>
<dbReference type="InterPro" id="IPR020588">
    <property type="entry name" value="RecA_ATP-bd"/>
</dbReference>
<dbReference type="InterPro" id="IPR023400">
    <property type="entry name" value="RecA_C_sf"/>
</dbReference>
<dbReference type="InterPro" id="IPR020587">
    <property type="entry name" value="RecA_monomer-monomer_interface"/>
</dbReference>
<dbReference type="NCBIfam" id="TIGR02012">
    <property type="entry name" value="tigrfam_recA"/>
    <property type="match status" value="1"/>
</dbReference>
<dbReference type="PANTHER" id="PTHR45900:SF1">
    <property type="entry name" value="MITOCHONDRIAL DNA REPAIR PROTEIN RECA HOMOLOG-RELATED"/>
    <property type="match status" value="1"/>
</dbReference>
<dbReference type="PANTHER" id="PTHR45900">
    <property type="entry name" value="RECA"/>
    <property type="match status" value="1"/>
</dbReference>
<dbReference type="Pfam" id="PF00154">
    <property type="entry name" value="RecA"/>
    <property type="match status" value="1"/>
</dbReference>
<dbReference type="Pfam" id="PF21096">
    <property type="entry name" value="RecA_C"/>
    <property type="match status" value="1"/>
</dbReference>
<dbReference type="PRINTS" id="PR00142">
    <property type="entry name" value="RECA"/>
</dbReference>
<dbReference type="SMART" id="SM00382">
    <property type="entry name" value="AAA"/>
    <property type="match status" value="1"/>
</dbReference>
<dbReference type="SUPFAM" id="SSF52540">
    <property type="entry name" value="P-loop containing nucleoside triphosphate hydrolases"/>
    <property type="match status" value="1"/>
</dbReference>
<dbReference type="SUPFAM" id="SSF54752">
    <property type="entry name" value="RecA protein, C-terminal domain"/>
    <property type="match status" value="1"/>
</dbReference>
<dbReference type="PROSITE" id="PS00321">
    <property type="entry name" value="RECA_1"/>
    <property type="match status" value="1"/>
</dbReference>
<dbReference type="PROSITE" id="PS50162">
    <property type="entry name" value="RECA_2"/>
    <property type="match status" value="1"/>
</dbReference>
<dbReference type="PROSITE" id="PS50163">
    <property type="entry name" value="RECA_3"/>
    <property type="match status" value="1"/>
</dbReference>
<proteinExistence type="inferred from homology"/>
<feature type="chain" id="PRO_1000048006" description="Protein RecA">
    <location>
        <begin position="1"/>
        <end position="355"/>
    </location>
</feature>
<feature type="region of interest" description="Disordered" evidence="2">
    <location>
        <begin position="335"/>
        <end position="355"/>
    </location>
</feature>
<feature type="compositionally biased region" description="Acidic residues" evidence="2">
    <location>
        <begin position="341"/>
        <end position="355"/>
    </location>
</feature>
<feature type="binding site" evidence="1">
    <location>
        <begin position="67"/>
        <end position="74"/>
    </location>
    <ligand>
        <name>ATP</name>
        <dbReference type="ChEBI" id="CHEBI:30616"/>
    </ligand>
</feature>
<reference key="1">
    <citation type="journal article" date="2006" name="Genome Res.">
        <title>Massive genome erosion and functional adaptations provide insights into the symbiotic lifestyle of Sodalis glossinidius in the tsetse host.</title>
        <authorList>
            <person name="Toh H."/>
            <person name="Weiss B.L."/>
            <person name="Perkin S.A.H."/>
            <person name="Yamashita A."/>
            <person name="Oshima K."/>
            <person name="Hattori M."/>
            <person name="Aksoy S."/>
        </authorList>
    </citation>
    <scope>NUCLEOTIDE SEQUENCE [LARGE SCALE GENOMIC DNA]</scope>
    <source>
        <strain>morsitans</strain>
    </source>
</reference>
<gene>
    <name evidence="1" type="primary">recA</name>
    <name type="ordered locus">SG0537</name>
</gene>
<accession>Q2NVL3</accession>